<proteinExistence type="inferred from homology"/>
<dbReference type="EMBL" id="AP009384">
    <property type="protein sequence ID" value="BAF86605.1"/>
    <property type="molecule type" value="Genomic_DNA"/>
</dbReference>
<dbReference type="RefSeq" id="WP_012169138.1">
    <property type="nucleotide sequence ID" value="NC_009937.1"/>
</dbReference>
<dbReference type="SMR" id="A8IMT6"/>
<dbReference type="STRING" id="438753.AZC_0607"/>
<dbReference type="KEGG" id="azc:AZC_0607"/>
<dbReference type="eggNOG" id="COG0375">
    <property type="taxonomic scope" value="Bacteria"/>
</dbReference>
<dbReference type="HOGENOM" id="CLU_126929_0_0_5"/>
<dbReference type="Proteomes" id="UP000000270">
    <property type="component" value="Chromosome"/>
</dbReference>
<dbReference type="GO" id="GO:0016151">
    <property type="term" value="F:nickel cation binding"/>
    <property type="evidence" value="ECO:0007669"/>
    <property type="project" value="UniProtKB-UniRule"/>
</dbReference>
<dbReference type="GO" id="GO:0008270">
    <property type="term" value="F:zinc ion binding"/>
    <property type="evidence" value="ECO:0007669"/>
    <property type="project" value="UniProtKB-UniRule"/>
</dbReference>
<dbReference type="GO" id="GO:0051604">
    <property type="term" value="P:protein maturation"/>
    <property type="evidence" value="ECO:0007669"/>
    <property type="project" value="InterPro"/>
</dbReference>
<dbReference type="GO" id="GO:0036211">
    <property type="term" value="P:protein modification process"/>
    <property type="evidence" value="ECO:0007669"/>
    <property type="project" value="UniProtKB-UniRule"/>
</dbReference>
<dbReference type="Gene3D" id="3.30.2320.80">
    <property type="match status" value="1"/>
</dbReference>
<dbReference type="HAMAP" id="MF_00213">
    <property type="entry name" value="HypA_HybF"/>
    <property type="match status" value="1"/>
</dbReference>
<dbReference type="InterPro" id="IPR000688">
    <property type="entry name" value="HypA/HybF"/>
</dbReference>
<dbReference type="NCBIfam" id="TIGR00100">
    <property type="entry name" value="hypA"/>
    <property type="match status" value="1"/>
</dbReference>
<dbReference type="PANTHER" id="PTHR34535">
    <property type="entry name" value="HYDROGENASE MATURATION FACTOR HYPA"/>
    <property type="match status" value="1"/>
</dbReference>
<dbReference type="PANTHER" id="PTHR34535:SF3">
    <property type="entry name" value="HYDROGENASE MATURATION FACTOR HYPA"/>
    <property type="match status" value="1"/>
</dbReference>
<dbReference type="Pfam" id="PF01155">
    <property type="entry name" value="HypA"/>
    <property type="match status" value="1"/>
</dbReference>
<dbReference type="PIRSF" id="PIRSF004761">
    <property type="entry name" value="Hydrgn_mat_HypA"/>
    <property type="match status" value="1"/>
</dbReference>
<comment type="function">
    <text evidence="1">Involved in the maturation of [NiFe] hydrogenases. Required for nickel insertion into the metal center of the hydrogenase.</text>
</comment>
<comment type="similarity">
    <text evidence="1">Belongs to the HypA/HybF family.</text>
</comment>
<reference key="1">
    <citation type="submission" date="2007-04" db="EMBL/GenBank/DDBJ databases">
        <title>Complete genome sequence of the nitrogen-fixing bacterium Azorhizobium caulinodans ORS571.</title>
        <authorList>
            <person name="Lee K.B."/>
            <person name="Backer P.D."/>
            <person name="Aono T."/>
            <person name="Liu C.T."/>
            <person name="Suzuki S."/>
            <person name="Suzuki T."/>
            <person name="Kaneko T."/>
            <person name="Yamada M."/>
            <person name="Tabata S."/>
            <person name="Kupfer D.M."/>
            <person name="Najar F.Z."/>
            <person name="Wiley G.B."/>
            <person name="Roe B."/>
            <person name="Binnewies T."/>
            <person name="Ussery D."/>
            <person name="Vereecke D."/>
            <person name="Gevers D."/>
            <person name="Holsters M."/>
            <person name="Oyaizu H."/>
        </authorList>
    </citation>
    <scope>NUCLEOTIDE SEQUENCE [LARGE SCALE GENOMIC DNA]</scope>
    <source>
        <strain>ATCC 43989 / DSM 5975 / JCM 20966 / LMG 6465 / NBRC 14845 / NCIMB 13405 / ORS 571</strain>
    </source>
</reference>
<evidence type="ECO:0000255" key="1">
    <source>
        <dbReference type="HAMAP-Rule" id="MF_00213"/>
    </source>
</evidence>
<sequence length="113" mass="12208">MHEMAICESLRVSMEEAARAQDFSRVTRVRLAIGAFAGVEVEALRFGFDVVMQGSLAEGAELVVLEEEGTAWCFDCNRTVPLATRLDPCPCCGGERLVPNGGTGMTIKDLEVV</sequence>
<feature type="chain" id="PRO_1000071749" description="Hydrogenase maturation factor HypA">
    <location>
        <begin position="1"/>
        <end position="113"/>
    </location>
</feature>
<feature type="binding site" evidence="1">
    <location>
        <position position="2"/>
    </location>
    <ligand>
        <name>Ni(2+)</name>
        <dbReference type="ChEBI" id="CHEBI:49786"/>
    </ligand>
</feature>
<feature type="binding site" evidence="1">
    <location>
        <position position="73"/>
    </location>
    <ligand>
        <name>Zn(2+)</name>
        <dbReference type="ChEBI" id="CHEBI:29105"/>
    </ligand>
</feature>
<feature type="binding site" evidence="1">
    <location>
        <position position="76"/>
    </location>
    <ligand>
        <name>Zn(2+)</name>
        <dbReference type="ChEBI" id="CHEBI:29105"/>
    </ligand>
</feature>
<feature type="binding site" evidence="1">
    <location>
        <position position="89"/>
    </location>
    <ligand>
        <name>Zn(2+)</name>
        <dbReference type="ChEBI" id="CHEBI:29105"/>
    </ligand>
</feature>
<feature type="binding site" evidence="1">
    <location>
        <position position="92"/>
    </location>
    <ligand>
        <name>Zn(2+)</name>
        <dbReference type="ChEBI" id="CHEBI:29105"/>
    </ligand>
</feature>
<name>HYPA_AZOC5</name>
<protein>
    <recommendedName>
        <fullName evidence="1">Hydrogenase maturation factor HypA</fullName>
    </recommendedName>
</protein>
<organism>
    <name type="scientific">Azorhizobium caulinodans (strain ATCC 43989 / DSM 5975 / JCM 20966 / LMG 6465 / NBRC 14845 / NCIMB 13405 / ORS 571)</name>
    <dbReference type="NCBI Taxonomy" id="438753"/>
    <lineage>
        <taxon>Bacteria</taxon>
        <taxon>Pseudomonadati</taxon>
        <taxon>Pseudomonadota</taxon>
        <taxon>Alphaproteobacteria</taxon>
        <taxon>Hyphomicrobiales</taxon>
        <taxon>Xanthobacteraceae</taxon>
        <taxon>Azorhizobium</taxon>
    </lineage>
</organism>
<gene>
    <name evidence="1" type="primary">hypA</name>
    <name type="ordered locus">AZC_0607</name>
</gene>
<keyword id="KW-0479">Metal-binding</keyword>
<keyword id="KW-0533">Nickel</keyword>
<keyword id="KW-1185">Reference proteome</keyword>
<keyword id="KW-0862">Zinc</keyword>
<accession>A8IMT6</accession>